<sequence length="415" mass="47473">MSLQAPKGTKDLLPTESYKWQYLENKFRNIAADFGCREIRTPVFEYTELFQRGVGETTDVVQKEMYTFEDKAGRSITLKPEGTSPAVRAFVEGRLFNETQPTKMYYFTPVMRYENVQKGRLRQHHQFGIEIFGAKDASVDAEVISIPVGIYKELGVEGVELNINSIGCPKCRKTYNEALKKYLSKNYDKLCSTCKTRFDKNPLRILDCKVDTCKEIVKDAPIILDYICGECKEHFESLKNYLDVLNINYKIDPFIVRGLDYYSKTVFEFITDDITICAGGRYDYLIEEIGGPSMPAVGFGMGMERLLLTLQEKAIEIPEEAYVDLYLGNMGDKAKLEVLKLAKELRDRHIKCEIDHMGKSVKAQMKYANRIGAKYSMVLGEEELNTGKATIKKMEDGQQIEVDIKDMDTLIKVFK</sequence>
<organism>
    <name type="scientific">Clostridium botulinum (strain Kyoto / Type A2)</name>
    <dbReference type="NCBI Taxonomy" id="536232"/>
    <lineage>
        <taxon>Bacteria</taxon>
        <taxon>Bacillati</taxon>
        <taxon>Bacillota</taxon>
        <taxon>Clostridia</taxon>
        <taxon>Eubacteriales</taxon>
        <taxon>Clostridiaceae</taxon>
        <taxon>Clostridium</taxon>
    </lineage>
</organism>
<reference key="1">
    <citation type="submission" date="2008-10" db="EMBL/GenBank/DDBJ databases">
        <title>Genome sequence of Clostridium botulinum A2 Kyoto.</title>
        <authorList>
            <person name="Shrivastava S."/>
            <person name="Brinkac L.M."/>
            <person name="Brown J.L."/>
            <person name="Bruce D."/>
            <person name="Detter C.C."/>
            <person name="Johnson E.A."/>
            <person name="Munk C.A."/>
            <person name="Smith L.A."/>
            <person name="Smith T.J."/>
            <person name="Sutton G."/>
            <person name="Brettin T.S."/>
        </authorList>
    </citation>
    <scope>NUCLEOTIDE SEQUENCE [LARGE SCALE GENOMIC DNA]</scope>
    <source>
        <strain>Kyoto / Type A2</strain>
    </source>
</reference>
<dbReference type="EC" id="6.1.1.21" evidence="1"/>
<dbReference type="EMBL" id="CP001581">
    <property type="protein sequence ID" value="ACO85853.1"/>
    <property type="molecule type" value="Genomic_DNA"/>
</dbReference>
<dbReference type="RefSeq" id="WP_012704987.1">
    <property type="nucleotide sequence ID" value="NC_012563.1"/>
</dbReference>
<dbReference type="SMR" id="C1FKE6"/>
<dbReference type="KEGG" id="cby:CLM_3460"/>
<dbReference type="eggNOG" id="COG0124">
    <property type="taxonomic scope" value="Bacteria"/>
</dbReference>
<dbReference type="HOGENOM" id="CLU_025113_1_1_9"/>
<dbReference type="Proteomes" id="UP000001374">
    <property type="component" value="Chromosome"/>
</dbReference>
<dbReference type="GO" id="GO:0005737">
    <property type="term" value="C:cytoplasm"/>
    <property type="evidence" value="ECO:0007669"/>
    <property type="project" value="UniProtKB-SubCell"/>
</dbReference>
<dbReference type="GO" id="GO:0005524">
    <property type="term" value="F:ATP binding"/>
    <property type="evidence" value="ECO:0007669"/>
    <property type="project" value="UniProtKB-UniRule"/>
</dbReference>
<dbReference type="GO" id="GO:0140096">
    <property type="term" value="F:catalytic activity, acting on a protein"/>
    <property type="evidence" value="ECO:0007669"/>
    <property type="project" value="UniProtKB-ARBA"/>
</dbReference>
<dbReference type="GO" id="GO:0004821">
    <property type="term" value="F:histidine-tRNA ligase activity"/>
    <property type="evidence" value="ECO:0007669"/>
    <property type="project" value="UniProtKB-UniRule"/>
</dbReference>
<dbReference type="GO" id="GO:0016740">
    <property type="term" value="F:transferase activity"/>
    <property type="evidence" value="ECO:0007669"/>
    <property type="project" value="UniProtKB-ARBA"/>
</dbReference>
<dbReference type="GO" id="GO:0006427">
    <property type="term" value="P:histidyl-tRNA aminoacylation"/>
    <property type="evidence" value="ECO:0007669"/>
    <property type="project" value="UniProtKB-UniRule"/>
</dbReference>
<dbReference type="CDD" id="cd00773">
    <property type="entry name" value="HisRS-like_core"/>
    <property type="match status" value="1"/>
</dbReference>
<dbReference type="CDD" id="cd00859">
    <property type="entry name" value="HisRS_anticodon"/>
    <property type="match status" value="1"/>
</dbReference>
<dbReference type="FunFam" id="3.30.930.10:FF:000005">
    <property type="entry name" value="Histidine--tRNA ligase"/>
    <property type="match status" value="1"/>
</dbReference>
<dbReference type="Gene3D" id="3.40.50.800">
    <property type="entry name" value="Anticodon-binding domain"/>
    <property type="match status" value="1"/>
</dbReference>
<dbReference type="Gene3D" id="3.30.930.10">
    <property type="entry name" value="Bira Bifunctional Protein, Domain 2"/>
    <property type="match status" value="1"/>
</dbReference>
<dbReference type="HAMAP" id="MF_00127">
    <property type="entry name" value="His_tRNA_synth"/>
    <property type="match status" value="1"/>
</dbReference>
<dbReference type="InterPro" id="IPR006195">
    <property type="entry name" value="aa-tRNA-synth_II"/>
</dbReference>
<dbReference type="InterPro" id="IPR045864">
    <property type="entry name" value="aa-tRNA-synth_II/BPL/LPL"/>
</dbReference>
<dbReference type="InterPro" id="IPR004154">
    <property type="entry name" value="Anticodon-bd"/>
</dbReference>
<dbReference type="InterPro" id="IPR036621">
    <property type="entry name" value="Anticodon-bd_dom_sf"/>
</dbReference>
<dbReference type="InterPro" id="IPR015807">
    <property type="entry name" value="His-tRNA-ligase"/>
</dbReference>
<dbReference type="InterPro" id="IPR041715">
    <property type="entry name" value="HisRS-like_core"/>
</dbReference>
<dbReference type="InterPro" id="IPR004516">
    <property type="entry name" value="HisRS/HisZ"/>
</dbReference>
<dbReference type="InterPro" id="IPR033656">
    <property type="entry name" value="HisRS_anticodon"/>
</dbReference>
<dbReference type="NCBIfam" id="TIGR00442">
    <property type="entry name" value="hisS"/>
    <property type="match status" value="1"/>
</dbReference>
<dbReference type="PANTHER" id="PTHR43707:SF1">
    <property type="entry name" value="HISTIDINE--TRNA LIGASE, MITOCHONDRIAL-RELATED"/>
    <property type="match status" value="1"/>
</dbReference>
<dbReference type="PANTHER" id="PTHR43707">
    <property type="entry name" value="HISTIDYL-TRNA SYNTHETASE"/>
    <property type="match status" value="1"/>
</dbReference>
<dbReference type="Pfam" id="PF03129">
    <property type="entry name" value="HGTP_anticodon"/>
    <property type="match status" value="1"/>
</dbReference>
<dbReference type="Pfam" id="PF13393">
    <property type="entry name" value="tRNA-synt_His"/>
    <property type="match status" value="1"/>
</dbReference>
<dbReference type="PIRSF" id="PIRSF001549">
    <property type="entry name" value="His-tRNA_synth"/>
    <property type="match status" value="1"/>
</dbReference>
<dbReference type="SUPFAM" id="SSF52954">
    <property type="entry name" value="Class II aaRS ABD-related"/>
    <property type="match status" value="1"/>
</dbReference>
<dbReference type="SUPFAM" id="SSF55681">
    <property type="entry name" value="Class II aaRS and biotin synthetases"/>
    <property type="match status" value="1"/>
</dbReference>
<dbReference type="PROSITE" id="PS50862">
    <property type="entry name" value="AA_TRNA_LIGASE_II"/>
    <property type="match status" value="1"/>
</dbReference>
<protein>
    <recommendedName>
        <fullName evidence="1">Histidine--tRNA ligase</fullName>
        <ecNumber evidence="1">6.1.1.21</ecNumber>
    </recommendedName>
    <alternativeName>
        <fullName evidence="1">Histidyl-tRNA synthetase</fullName>
        <shortName evidence="1">HisRS</shortName>
    </alternativeName>
</protein>
<proteinExistence type="inferred from homology"/>
<accession>C1FKE6</accession>
<name>SYH_CLOBJ</name>
<evidence type="ECO:0000255" key="1">
    <source>
        <dbReference type="HAMAP-Rule" id="MF_00127"/>
    </source>
</evidence>
<comment type="catalytic activity">
    <reaction evidence="1">
        <text>tRNA(His) + L-histidine + ATP = L-histidyl-tRNA(His) + AMP + diphosphate + H(+)</text>
        <dbReference type="Rhea" id="RHEA:17313"/>
        <dbReference type="Rhea" id="RHEA-COMP:9665"/>
        <dbReference type="Rhea" id="RHEA-COMP:9689"/>
        <dbReference type="ChEBI" id="CHEBI:15378"/>
        <dbReference type="ChEBI" id="CHEBI:30616"/>
        <dbReference type="ChEBI" id="CHEBI:33019"/>
        <dbReference type="ChEBI" id="CHEBI:57595"/>
        <dbReference type="ChEBI" id="CHEBI:78442"/>
        <dbReference type="ChEBI" id="CHEBI:78527"/>
        <dbReference type="ChEBI" id="CHEBI:456215"/>
        <dbReference type="EC" id="6.1.1.21"/>
    </reaction>
</comment>
<comment type="subunit">
    <text evidence="1">Homodimer.</text>
</comment>
<comment type="subcellular location">
    <subcellularLocation>
        <location evidence="1">Cytoplasm</location>
    </subcellularLocation>
</comment>
<comment type="similarity">
    <text evidence="1">Belongs to the class-II aminoacyl-tRNA synthetase family.</text>
</comment>
<keyword id="KW-0030">Aminoacyl-tRNA synthetase</keyword>
<keyword id="KW-0067">ATP-binding</keyword>
<keyword id="KW-0963">Cytoplasm</keyword>
<keyword id="KW-0436">Ligase</keyword>
<keyword id="KW-0547">Nucleotide-binding</keyword>
<keyword id="KW-0648">Protein biosynthesis</keyword>
<feature type="chain" id="PRO_1000199120" description="Histidine--tRNA ligase">
    <location>
        <begin position="1"/>
        <end position="415"/>
    </location>
</feature>
<gene>
    <name evidence="1" type="primary">hisS</name>
    <name type="ordered locus">CLM_3460</name>
</gene>